<proteinExistence type="inferred from homology"/>
<feature type="chain" id="PRO_1000023782" description="Transcription antitermination protein NusB">
    <location>
        <begin position="1"/>
        <end position="130"/>
    </location>
</feature>
<protein>
    <recommendedName>
        <fullName evidence="1">Transcription antitermination protein NusB</fullName>
    </recommendedName>
    <alternativeName>
        <fullName evidence="1">Antitermination factor NusB</fullName>
    </alternativeName>
</protein>
<evidence type="ECO:0000255" key="1">
    <source>
        <dbReference type="HAMAP-Rule" id="MF_00073"/>
    </source>
</evidence>
<accession>A6QBK6</accession>
<sequence>MATRHQARTAVVGLLYAYDLGNENIAKFSDEILEEDKIRNKQRDFSHDLFDGTIENLEMLDAEIEKHLTDWDYDAIGRVEKAILRLGAYEILVAKTDRAIIINEAVELAKSLADEKSPQFINGVLDAIGK</sequence>
<dbReference type="EMBL" id="AP009179">
    <property type="protein sequence ID" value="BAF72865.1"/>
    <property type="molecule type" value="Genomic_DNA"/>
</dbReference>
<dbReference type="RefSeq" id="WP_012083683.1">
    <property type="nucleotide sequence ID" value="NC_009663.1"/>
</dbReference>
<dbReference type="SMR" id="A6QBK6"/>
<dbReference type="STRING" id="387093.SUN_1918"/>
<dbReference type="KEGG" id="sun:SUN_1918"/>
<dbReference type="eggNOG" id="COG0781">
    <property type="taxonomic scope" value="Bacteria"/>
</dbReference>
<dbReference type="HOGENOM" id="CLU_087843_3_3_7"/>
<dbReference type="OrthoDB" id="9797817at2"/>
<dbReference type="Proteomes" id="UP000006378">
    <property type="component" value="Chromosome"/>
</dbReference>
<dbReference type="GO" id="GO:0005829">
    <property type="term" value="C:cytosol"/>
    <property type="evidence" value="ECO:0007669"/>
    <property type="project" value="TreeGrafter"/>
</dbReference>
<dbReference type="GO" id="GO:0003723">
    <property type="term" value="F:RNA binding"/>
    <property type="evidence" value="ECO:0007669"/>
    <property type="project" value="UniProtKB-UniRule"/>
</dbReference>
<dbReference type="GO" id="GO:0006353">
    <property type="term" value="P:DNA-templated transcription termination"/>
    <property type="evidence" value="ECO:0007669"/>
    <property type="project" value="UniProtKB-UniRule"/>
</dbReference>
<dbReference type="GO" id="GO:0031564">
    <property type="term" value="P:transcription antitermination"/>
    <property type="evidence" value="ECO:0007669"/>
    <property type="project" value="UniProtKB-KW"/>
</dbReference>
<dbReference type="Gene3D" id="1.10.940.10">
    <property type="entry name" value="NusB-like"/>
    <property type="match status" value="1"/>
</dbReference>
<dbReference type="HAMAP" id="MF_00073">
    <property type="entry name" value="NusB"/>
    <property type="match status" value="1"/>
</dbReference>
<dbReference type="InterPro" id="IPR035926">
    <property type="entry name" value="NusB-like_sf"/>
</dbReference>
<dbReference type="InterPro" id="IPR011605">
    <property type="entry name" value="NusB_fam"/>
</dbReference>
<dbReference type="InterPro" id="IPR006027">
    <property type="entry name" value="NusB_RsmB_TIM44"/>
</dbReference>
<dbReference type="NCBIfam" id="TIGR01951">
    <property type="entry name" value="nusB"/>
    <property type="match status" value="1"/>
</dbReference>
<dbReference type="PANTHER" id="PTHR11078:SF3">
    <property type="entry name" value="ANTITERMINATION NUSB DOMAIN-CONTAINING PROTEIN"/>
    <property type="match status" value="1"/>
</dbReference>
<dbReference type="PANTHER" id="PTHR11078">
    <property type="entry name" value="N UTILIZATION SUBSTANCE PROTEIN B-RELATED"/>
    <property type="match status" value="1"/>
</dbReference>
<dbReference type="Pfam" id="PF01029">
    <property type="entry name" value="NusB"/>
    <property type="match status" value="1"/>
</dbReference>
<dbReference type="SUPFAM" id="SSF48013">
    <property type="entry name" value="NusB-like"/>
    <property type="match status" value="1"/>
</dbReference>
<gene>
    <name evidence="1" type="primary">nusB</name>
    <name type="ordered locus">SUN_1918</name>
</gene>
<keyword id="KW-0694">RNA-binding</keyword>
<keyword id="KW-0804">Transcription</keyword>
<keyword id="KW-0889">Transcription antitermination</keyword>
<keyword id="KW-0805">Transcription regulation</keyword>
<comment type="function">
    <text evidence="1">Involved in transcription antitermination. Required for transcription of ribosomal RNA (rRNA) genes. Binds specifically to the boxA antiterminator sequence of the ribosomal RNA (rrn) operons.</text>
</comment>
<comment type="similarity">
    <text evidence="1">Belongs to the NusB family.</text>
</comment>
<reference key="1">
    <citation type="journal article" date="2007" name="Proc. Natl. Acad. Sci. U.S.A.">
        <title>Deep-sea vent epsilon-proteobacterial genomes provide insights into emergence of pathogens.</title>
        <authorList>
            <person name="Nakagawa S."/>
            <person name="Takaki Y."/>
            <person name="Shimamura S."/>
            <person name="Reysenbach A.-L."/>
            <person name="Takai K."/>
            <person name="Horikoshi K."/>
        </authorList>
    </citation>
    <scope>NUCLEOTIDE SEQUENCE [LARGE SCALE GENOMIC DNA]</scope>
    <source>
        <strain>NBC37-1</strain>
    </source>
</reference>
<name>NUSB_SULNB</name>
<organism>
    <name type="scientific">Sulfurovum sp. (strain NBC37-1)</name>
    <dbReference type="NCBI Taxonomy" id="387093"/>
    <lineage>
        <taxon>Bacteria</taxon>
        <taxon>Pseudomonadati</taxon>
        <taxon>Campylobacterota</taxon>
        <taxon>Epsilonproteobacteria</taxon>
        <taxon>Campylobacterales</taxon>
        <taxon>Sulfurovaceae</taxon>
        <taxon>Sulfurovum</taxon>
    </lineage>
</organism>